<proteinExistence type="inferred from homology"/>
<keyword id="KW-0067">ATP-binding</keyword>
<keyword id="KW-0238">DNA-binding</keyword>
<keyword id="KW-0479">Metal-binding</keyword>
<keyword id="KW-0547">Nucleotide-binding</keyword>
<keyword id="KW-1185">Reference proteome</keyword>
<keyword id="KW-0678">Repressor</keyword>
<keyword id="KW-0804">Transcription</keyword>
<keyword id="KW-0805">Transcription regulation</keyword>
<keyword id="KW-0862">Zinc</keyword>
<keyword id="KW-0863">Zinc-finger</keyword>
<feature type="chain" id="PRO_1000080781" description="Transcriptional repressor NrdR">
    <location>
        <begin position="1"/>
        <end position="154"/>
    </location>
</feature>
<feature type="domain" description="ATP-cone" evidence="1">
    <location>
        <begin position="46"/>
        <end position="136"/>
    </location>
</feature>
<feature type="zinc finger region" evidence="1">
    <location>
        <begin position="3"/>
        <end position="34"/>
    </location>
</feature>
<accession>A5U670</accession>
<gene>
    <name evidence="1" type="primary">nrdR</name>
    <name type="ordered locus">MRA_2746</name>
</gene>
<organism>
    <name type="scientific">Mycobacterium tuberculosis (strain ATCC 25177 / H37Ra)</name>
    <dbReference type="NCBI Taxonomy" id="419947"/>
    <lineage>
        <taxon>Bacteria</taxon>
        <taxon>Bacillati</taxon>
        <taxon>Actinomycetota</taxon>
        <taxon>Actinomycetes</taxon>
        <taxon>Mycobacteriales</taxon>
        <taxon>Mycobacteriaceae</taxon>
        <taxon>Mycobacterium</taxon>
        <taxon>Mycobacterium tuberculosis complex</taxon>
    </lineage>
</organism>
<name>NRDR_MYCTA</name>
<comment type="function">
    <text evidence="1">Negatively regulates transcription of bacterial ribonucleotide reductase nrd genes and operons by binding to NrdR-boxes.</text>
</comment>
<comment type="cofactor">
    <cofactor evidence="1">
        <name>Zn(2+)</name>
        <dbReference type="ChEBI" id="CHEBI:29105"/>
    </cofactor>
    <text evidence="1">Binds 1 zinc ion.</text>
</comment>
<comment type="similarity">
    <text evidence="1">Belongs to the NrdR family.</text>
</comment>
<evidence type="ECO:0000255" key="1">
    <source>
        <dbReference type="HAMAP-Rule" id="MF_00440"/>
    </source>
</evidence>
<sequence>MHCPFCRHPDSRVIDSRETDEGQAIRRRRSCPECGRRFTTVETAVLAVVKRSGVTEPFSREKVISGVRRACQGRQVDDDALNLLAQQVEDSVRAAGSPEIPSHDVGLAILGPLRELDEVAYLRFASVYRSFSSADDFAREIEALRAHRNLSAHS</sequence>
<reference key="1">
    <citation type="journal article" date="2008" name="PLoS ONE">
        <title>Genetic basis of virulence attenuation revealed by comparative genomic analysis of Mycobacterium tuberculosis strain H37Ra versus H37Rv.</title>
        <authorList>
            <person name="Zheng H."/>
            <person name="Lu L."/>
            <person name="Wang B."/>
            <person name="Pu S."/>
            <person name="Zhang X."/>
            <person name="Zhu G."/>
            <person name="Shi W."/>
            <person name="Zhang L."/>
            <person name="Wang H."/>
            <person name="Wang S."/>
            <person name="Zhao G."/>
            <person name="Zhang Y."/>
        </authorList>
    </citation>
    <scope>NUCLEOTIDE SEQUENCE [LARGE SCALE GENOMIC DNA]</scope>
    <source>
        <strain>ATCC 25177 / H37Ra</strain>
    </source>
</reference>
<protein>
    <recommendedName>
        <fullName evidence="1">Transcriptional repressor NrdR</fullName>
    </recommendedName>
</protein>
<dbReference type="EMBL" id="CP000611">
    <property type="protein sequence ID" value="ABQ74520.1"/>
    <property type="molecule type" value="Genomic_DNA"/>
</dbReference>
<dbReference type="RefSeq" id="WP_003413973.1">
    <property type="nucleotide sequence ID" value="NZ_CP016972.1"/>
</dbReference>
<dbReference type="SMR" id="A5U670"/>
<dbReference type="GeneID" id="45426705"/>
<dbReference type="KEGG" id="mra:MRA_2746"/>
<dbReference type="eggNOG" id="COG1327">
    <property type="taxonomic scope" value="Bacteria"/>
</dbReference>
<dbReference type="HOGENOM" id="CLU_108412_1_0_11"/>
<dbReference type="Proteomes" id="UP000001988">
    <property type="component" value="Chromosome"/>
</dbReference>
<dbReference type="GO" id="GO:0005524">
    <property type="term" value="F:ATP binding"/>
    <property type="evidence" value="ECO:0007669"/>
    <property type="project" value="UniProtKB-KW"/>
</dbReference>
<dbReference type="GO" id="GO:0003677">
    <property type="term" value="F:DNA binding"/>
    <property type="evidence" value="ECO:0007669"/>
    <property type="project" value="UniProtKB-KW"/>
</dbReference>
<dbReference type="GO" id="GO:0008270">
    <property type="term" value="F:zinc ion binding"/>
    <property type="evidence" value="ECO:0007669"/>
    <property type="project" value="UniProtKB-UniRule"/>
</dbReference>
<dbReference type="GO" id="GO:0045892">
    <property type="term" value="P:negative regulation of DNA-templated transcription"/>
    <property type="evidence" value="ECO:0007669"/>
    <property type="project" value="UniProtKB-UniRule"/>
</dbReference>
<dbReference type="HAMAP" id="MF_00440">
    <property type="entry name" value="NrdR"/>
    <property type="match status" value="1"/>
</dbReference>
<dbReference type="InterPro" id="IPR005144">
    <property type="entry name" value="ATP-cone_dom"/>
</dbReference>
<dbReference type="InterPro" id="IPR055173">
    <property type="entry name" value="NrdR-like_N"/>
</dbReference>
<dbReference type="InterPro" id="IPR003796">
    <property type="entry name" value="RNR_NrdR-like"/>
</dbReference>
<dbReference type="NCBIfam" id="TIGR00244">
    <property type="entry name" value="transcriptional regulator NrdR"/>
    <property type="match status" value="1"/>
</dbReference>
<dbReference type="PANTHER" id="PTHR30455">
    <property type="entry name" value="TRANSCRIPTIONAL REPRESSOR NRDR"/>
    <property type="match status" value="1"/>
</dbReference>
<dbReference type="PANTHER" id="PTHR30455:SF2">
    <property type="entry name" value="TRANSCRIPTIONAL REPRESSOR NRDR"/>
    <property type="match status" value="1"/>
</dbReference>
<dbReference type="Pfam" id="PF03477">
    <property type="entry name" value="ATP-cone"/>
    <property type="match status" value="1"/>
</dbReference>
<dbReference type="Pfam" id="PF22811">
    <property type="entry name" value="Zn_ribbon_NrdR"/>
    <property type="match status" value="1"/>
</dbReference>
<dbReference type="PROSITE" id="PS51161">
    <property type="entry name" value="ATP_CONE"/>
    <property type="match status" value="1"/>
</dbReference>